<protein>
    <recommendedName>
        <fullName evidence="1">Co-chaperonin GroES</fullName>
    </recommendedName>
    <alternativeName>
        <fullName evidence="1">10 kDa chaperonin</fullName>
    </alternativeName>
    <alternativeName>
        <fullName evidence="1">Chaperonin-10</fullName>
        <shortName evidence="1">Cpn10</shortName>
    </alternativeName>
</protein>
<evidence type="ECO:0000255" key="1">
    <source>
        <dbReference type="HAMAP-Rule" id="MF_00580"/>
    </source>
</evidence>
<keyword id="KW-0143">Chaperone</keyword>
<keyword id="KW-0963">Cytoplasm</keyword>
<comment type="function">
    <text evidence="1">Together with the chaperonin GroEL, plays an essential role in assisting protein folding. The GroEL-GroES system forms a nano-cage that allows encapsulation of the non-native substrate proteins and provides a physical environment optimized to promote and accelerate protein folding. GroES binds to the apical surface of the GroEL ring, thereby capping the opening of the GroEL channel.</text>
</comment>
<comment type="subunit">
    <text evidence="1">Heptamer of 7 subunits arranged in a ring. Interacts with the chaperonin GroEL.</text>
</comment>
<comment type="subcellular location">
    <subcellularLocation>
        <location evidence="1">Cytoplasm</location>
    </subcellularLocation>
</comment>
<comment type="similarity">
    <text evidence="1">Belongs to the GroES chaperonin family.</text>
</comment>
<feature type="chain" id="PRO_0000174888" description="Co-chaperonin GroES">
    <location>
        <begin position="1"/>
        <end position="96"/>
    </location>
</feature>
<reference key="1">
    <citation type="journal article" date="2002" name="Appl. Environ. Microbiol.">
        <title>The genetic properties of the primary endosymbionts of mealybugs differ from those of other endosymbionts of plant sap-sucking insects.</title>
        <authorList>
            <person name="Baumann L."/>
            <person name="Thao M.L."/>
            <person name="Hess J.M."/>
            <person name="Johnson M.W."/>
            <person name="Baumann P."/>
        </authorList>
    </citation>
    <scope>NUCLEOTIDE SEQUENCE [GENOMIC DNA]</scope>
</reference>
<accession>Q8KTR9</accession>
<dbReference type="EMBL" id="AF481102">
    <property type="protein sequence ID" value="AAM75979.1"/>
    <property type="molecule type" value="Genomic_DNA"/>
</dbReference>
<dbReference type="SMR" id="Q8KTR9"/>
<dbReference type="STRING" id="1053648.TCP_024"/>
<dbReference type="GO" id="GO:0005737">
    <property type="term" value="C:cytoplasm"/>
    <property type="evidence" value="ECO:0007669"/>
    <property type="project" value="UniProtKB-SubCell"/>
</dbReference>
<dbReference type="GO" id="GO:0005524">
    <property type="term" value="F:ATP binding"/>
    <property type="evidence" value="ECO:0007669"/>
    <property type="project" value="InterPro"/>
</dbReference>
<dbReference type="GO" id="GO:0046872">
    <property type="term" value="F:metal ion binding"/>
    <property type="evidence" value="ECO:0007669"/>
    <property type="project" value="TreeGrafter"/>
</dbReference>
<dbReference type="GO" id="GO:0044183">
    <property type="term" value="F:protein folding chaperone"/>
    <property type="evidence" value="ECO:0007669"/>
    <property type="project" value="InterPro"/>
</dbReference>
<dbReference type="GO" id="GO:0051087">
    <property type="term" value="F:protein-folding chaperone binding"/>
    <property type="evidence" value="ECO:0007669"/>
    <property type="project" value="TreeGrafter"/>
</dbReference>
<dbReference type="GO" id="GO:0051082">
    <property type="term" value="F:unfolded protein binding"/>
    <property type="evidence" value="ECO:0007669"/>
    <property type="project" value="TreeGrafter"/>
</dbReference>
<dbReference type="GO" id="GO:0051085">
    <property type="term" value="P:chaperone cofactor-dependent protein refolding"/>
    <property type="evidence" value="ECO:0007669"/>
    <property type="project" value="TreeGrafter"/>
</dbReference>
<dbReference type="CDD" id="cd00320">
    <property type="entry name" value="cpn10"/>
    <property type="match status" value="1"/>
</dbReference>
<dbReference type="FunFam" id="2.30.33.40:FF:000001">
    <property type="entry name" value="10 kDa chaperonin"/>
    <property type="match status" value="1"/>
</dbReference>
<dbReference type="Gene3D" id="2.30.33.40">
    <property type="entry name" value="GroES chaperonin"/>
    <property type="match status" value="1"/>
</dbReference>
<dbReference type="HAMAP" id="MF_00580">
    <property type="entry name" value="CH10"/>
    <property type="match status" value="1"/>
</dbReference>
<dbReference type="InterPro" id="IPR020818">
    <property type="entry name" value="Chaperonin_GroES"/>
</dbReference>
<dbReference type="InterPro" id="IPR037124">
    <property type="entry name" value="Chaperonin_GroES_sf"/>
</dbReference>
<dbReference type="InterPro" id="IPR011032">
    <property type="entry name" value="GroES-like_sf"/>
</dbReference>
<dbReference type="NCBIfam" id="NF001527">
    <property type="entry name" value="PRK00364.1-2"/>
    <property type="match status" value="1"/>
</dbReference>
<dbReference type="NCBIfam" id="NF001531">
    <property type="entry name" value="PRK00364.2-2"/>
    <property type="match status" value="1"/>
</dbReference>
<dbReference type="NCBIfam" id="NF001533">
    <property type="entry name" value="PRK00364.2-4"/>
    <property type="match status" value="1"/>
</dbReference>
<dbReference type="PANTHER" id="PTHR10772">
    <property type="entry name" value="10 KDA HEAT SHOCK PROTEIN"/>
    <property type="match status" value="1"/>
</dbReference>
<dbReference type="PANTHER" id="PTHR10772:SF63">
    <property type="entry name" value="20 KDA CHAPERONIN, CHLOROPLASTIC"/>
    <property type="match status" value="1"/>
</dbReference>
<dbReference type="Pfam" id="PF00166">
    <property type="entry name" value="Cpn10"/>
    <property type="match status" value="1"/>
</dbReference>
<dbReference type="PRINTS" id="PR00297">
    <property type="entry name" value="CHAPERONIN10"/>
</dbReference>
<dbReference type="SMART" id="SM00883">
    <property type="entry name" value="Cpn10"/>
    <property type="match status" value="1"/>
</dbReference>
<dbReference type="SUPFAM" id="SSF50129">
    <property type="entry name" value="GroES-like"/>
    <property type="match status" value="1"/>
</dbReference>
<sequence>MSKIRPLGDRVVVKRSEDETKTPCGIVIPDSAAEKQDQGTVVALGPGKKDSEGARVPMEVRLGDRVLFGKYAGQSIKVDDEDLMVMREEDIVAVIE</sequence>
<name>CH10_TREPR</name>
<gene>
    <name evidence="1" type="primary">groES</name>
    <name evidence="1" type="synonym">groS</name>
</gene>
<organism>
    <name type="scientific">Tremblaya princeps</name>
    <dbReference type="NCBI Taxonomy" id="189385"/>
    <lineage>
        <taxon>Bacteria</taxon>
        <taxon>Pseudomonadati</taxon>
        <taxon>Pseudomonadota</taxon>
        <taxon>Betaproteobacteria</taxon>
        <taxon>Candidatus Tremblaya</taxon>
    </lineage>
</organism>
<proteinExistence type="inferred from homology"/>